<keyword id="KW-0963">Cytoplasm</keyword>
<keyword id="KW-1185">Reference proteome</keyword>
<keyword id="KW-0687">Ribonucleoprotein</keyword>
<keyword id="KW-0689">Ribosomal protein</keyword>
<feature type="chain" id="PRO_0000291622" description="Large ribosomal subunit protein eL18">
    <location>
        <begin position="1"/>
        <end position="188"/>
    </location>
</feature>
<feature type="region of interest" description="Disordered" evidence="2">
    <location>
        <begin position="143"/>
        <end position="188"/>
    </location>
</feature>
<feature type="compositionally biased region" description="Basic residues" evidence="2">
    <location>
        <begin position="161"/>
        <end position="171"/>
    </location>
</feature>
<feature type="compositionally biased region" description="Basic residues" evidence="2">
    <location>
        <begin position="178"/>
        <end position="188"/>
    </location>
</feature>
<protein>
    <recommendedName>
        <fullName evidence="3">Large ribosomal subunit protein eL18</fullName>
    </recommendedName>
    <alternativeName>
        <fullName>60S ribosomal protein L18</fullName>
    </alternativeName>
</protein>
<evidence type="ECO:0000250" key="1"/>
<evidence type="ECO:0000256" key="2">
    <source>
        <dbReference type="SAM" id="MobiDB-lite"/>
    </source>
</evidence>
<evidence type="ECO:0000305" key="3"/>
<proteinExistence type="inferred from homology"/>
<name>RL18_CAEBR</name>
<gene>
    <name type="primary">rpl-18</name>
    <name type="ORF">CBG22372</name>
</gene>
<organism>
    <name type="scientific">Caenorhabditis briggsae</name>
    <dbReference type="NCBI Taxonomy" id="6238"/>
    <lineage>
        <taxon>Eukaryota</taxon>
        <taxon>Metazoa</taxon>
        <taxon>Ecdysozoa</taxon>
        <taxon>Nematoda</taxon>
        <taxon>Chromadorea</taxon>
        <taxon>Rhabditida</taxon>
        <taxon>Rhabditina</taxon>
        <taxon>Rhabditomorpha</taxon>
        <taxon>Rhabditoidea</taxon>
        <taxon>Rhabditidae</taxon>
        <taxon>Peloderinae</taxon>
        <taxon>Caenorhabditis</taxon>
    </lineage>
</organism>
<accession>Q60P81</accession>
<accession>A8Y235</accession>
<dbReference type="EMBL" id="HE600912">
    <property type="protein sequence ID" value="CAP38975.1"/>
    <property type="molecule type" value="Genomic_DNA"/>
</dbReference>
<dbReference type="SMR" id="Q60P81"/>
<dbReference type="FunCoup" id="Q60P81">
    <property type="interactions" value="1784"/>
</dbReference>
<dbReference type="STRING" id="6238.Q60P81"/>
<dbReference type="EnsemblMetazoa" id="CBG22372.1">
    <property type="protein sequence ID" value="CBG22372.1"/>
    <property type="gene ID" value="WBGene00040945"/>
</dbReference>
<dbReference type="KEGG" id="cbr:CBG_22372"/>
<dbReference type="CTD" id="8589195"/>
<dbReference type="WormBase" id="CBG22372">
    <property type="protein sequence ID" value="CBP12125"/>
    <property type="gene ID" value="WBGene00040945"/>
    <property type="gene designation" value="Cbr-rpl-18"/>
</dbReference>
<dbReference type="eggNOG" id="KOG1714">
    <property type="taxonomic scope" value="Eukaryota"/>
</dbReference>
<dbReference type="HOGENOM" id="CLU_080024_0_0_1"/>
<dbReference type="InParanoid" id="Q60P81"/>
<dbReference type="OMA" id="IDICHKN"/>
<dbReference type="OrthoDB" id="6353017at2759"/>
<dbReference type="Proteomes" id="UP000008549">
    <property type="component" value="Unassembled WGS sequence"/>
</dbReference>
<dbReference type="GO" id="GO:0022625">
    <property type="term" value="C:cytosolic large ribosomal subunit"/>
    <property type="evidence" value="ECO:0000318"/>
    <property type="project" value="GO_Central"/>
</dbReference>
<dbReference type="GO" id="GO:0003723">
    <property type="term" value="F:RNA binding"/>
    <property type="evidence" value="ECO:0000318"/>
    <property type="project" value="GO_Central"/>
</dbReference>
<dbReference type="GO" id="GO:0003735">
    <property type="term" value="F:structural constituent of ribosome"/>
    <property type="evidence" value="ECO:0000318"/>
    <property type="project" value="GO_Central"/>
</dbReference>
<dbReference type="GO" id="GO:0006412">
    <property type="term" value="P:translation"/>
    <property type="evidence" value="ECO:0007669"/>
    <property type="project" value="InterPro"/>
</dbReference>
<dbReference type="FunFam" id="3.100.10.10:FF:000001">
    <property type="entry name" value="60S ribosomal protein L18"/>
    <property type="match status" value="1"/>
</dbReference>
<dbReference type="Gene3D" id="3.100.10.10">
    <property type="match status" value="1"/>
</dbReference>
<dbReference type="InterPro" id="IPR000039">
    <property type="entry name" value="Ribosomal_eL18"/>
</dbReference>
<dbReference type="InterPro" id="IPR021131">
    <property type="entry name" value="Ribosomal_uL15/eL18"/>
</dbReference>
<dbReference type="InterPro" id="IPR036227">
    <property type="entry name" value="Ribosomal_uL15/eL18_sf"/>
</dbReference>
<dbReference type="PANTHER" id="PTHR10934">
    <property type="entry name" value="60S RIBOSOMAL PROTEIN L18"/>
    <property type="match status" value="1"/>
</dbReference>
<dbReference type="PANTHER" id="PTHR10934:SF2">
    <property type="entry name" value="LARGE RIBOSOMAL SUBUNIT PROTEIN EL18"/>
    <property type="match status" value="1"/>
</dbReference>
<dbReference type="Pfam" id="PF17135">
    <property type="entry name" value="Ribosomal_L18"/>
    <property type="match status" value="1"/>
</dbReference>
<dbReference type="SUPFAM" id="SSF52080">
    <property type="entry name" value="Ribosomal proteins L15p and L18e"/>
    <property type="match status" value="1"/>
</dbReference>
<sequence length="188" mass="21041">MGIDISHKHDRVARRTAPKSENPYLRLLSKLYAFLARRTGEKFNAIVLKRLRMSRRNRQPLSLAKVARVVKQAGNEKKTVVTLSTVTDDARLYEVPKISLAALHVTEGARARILAAGGEIITLDQLALRSPKGENTVFLQGPRSAREAEKHFGPAPGVPHSHTKPHVRSKGRKFERARGRRASRAYKN</sequence>
<reference key="1">
    <citation type="journal article" date="2003" name="PLoS Biol.">
        <title>The genome sequence of Caenorhabditis briggsae: a platform for comparative genomics.</title>
        <authorList>
            <person name="Stein L.D."/>
            <person name="Bao Z."/>
            <person name="Blasiar D."/>
            <person name="Blumenthal T."/>
            <person name="Brent M.R."/>
            <person name="Chen N."/>
            <person name="Chinwalla A."/>
            <person name="Clarke L."/>
            <person name="Clee C."/>
            <person name="Coghlan A."/>
            <person name="Coulson A."/>
            <person name="D'Eustachio P."/>
            <person name="Fitch D.H.A."/>
            <person name="Fulton L.A."/>
            <person name="Fulton R.E."/>
            <person name="Griffiths-Jones S."/>
            <person name="Harris T.W."/>
            <person name="Hillier L.W."/>
            <person name="Kamath R."/>
            <person name="Kuwabara P.E."/>
            <person name="Mardis E.R."/>
            <person name="Marra M.A."/>
            <person name="Miner T.L."/>
            <person name="Minx P."/>
            <person name="Mullikin J.C."/>
            <person name="Plumb R.W."/>
            <person name="Rogers J."/>
            <person name="Schein J.E."/>
            <person name="Sohrmann M."/>
            <person name="Spieth J."/>
            <person name="Stajich J.E."/>
            <person name="Wei C."/>
            <person name="Willey D."/>
            <person name="Wilson R.K."/>
            <person name="Durbin R.M."/>
            <person name="Waterston R.H."/>
        </authorList>
    </citation>
    <scope>NUCLEOTIDE SEQUENCE [LARGE SCALE GENOMIC DNA]</scope>
    <source>
        <strain>AF16</strain>
    </source>
</reference>
<comment type="subcellular location">
    <subcellularLocation>
        <location evidence="1">Cytoplasm</location>
    </subcellularLocation>
</comment>
<comment type="similarity">
    <text evidence="3">Belongs to the eukaryotic ribosomal protein eL18 family.</text>
</comment>